<organism>
    <name type="scientific">Debaryomyces hansenii (strain ATCC 36239 / CBS 767 / BCRC 21394 / JCM 1990 / NBRC 0083 / IGC 2968)</name>
    <name type="common">Yeast</name>
    <name type="synonym">Torulaspora hansenii</name>
    <dbReference type="NCBI Taxonomy" id="284592"/>
    <lineage>
        <taxon>Eukaryota</taxon>
        <taxon>Fungi</taxon>
        <taxon>Dikarya</taxon>
        <taxon>Ascomycota</taxon>
        <taxon>Saccharomycotina</taxon>
        <taxon>Pichiomycetes</taxon>
        <taxon>Debaryomycetaceae</taxon>
        <taxon>Debaryomyces</taxon>
    </lineage>
</organism>
<keyword id="KW-0472">Membrane</keyword>
<keyword id="KW-0496">Mitochondrion</keyword>
<keyword id="KW-0999">Mitochondrion inner membrane</keyword>
<keyword id="KW-0507">mRNA processing</keyword>
<keyword id="KW-1185">Reference proteome</keyword>
<keyword id="KW-0694">RNA-binding</keyword>
<keyword id="KW-0809">Transit peptide</keyword>
<keyword id="KW-0812">Transmembrane</keyword>
<keyword id="KW-1133">Transmembrane helix</keyword>
<proteinExistence type="inferred from homology"/>
<comment type="function">
    <text evidence="1">Plays a role in maintaining the mitochondrial genome and in controlling the mtDNA escape. Involved in the regulation of mtDNA nucleotide structure and number. May have a dispensable role in early maturation of pre-rRNA (By similarity).</text>
</comment>
<comment type="subcellular location">
    <subcellularLocation>
        <location evidence="1">Mitochondrion inner membrane</location>
        <topology evidence="1">Single-pass membrane protein</topology>
    </subcellularLocation>
</comment>
<comment type="similarity">
    <text evidence="3">Belongs to the YME2 family.</text>
</comment>
<gene>
    <name type="primary">YME2</name>
    <name type="ordered locus">DEHA2F20108g</name>
</gene>
<accession>Q6BKQ1</accession>
<dbReference type="EMBL" id="CR382138">
    <property type="protein sequence ID" value="CAG89608.2"/>
    <property type="molecule type" value="Genomic_DNA"/>
</dbReference>
<dbReference type="RefSeq" id="XP_461220.2">
    <property type="nucleotide sequence ID" value="XM_461220.1"/>
</dbReference>
<dbReference type="FunCoup" id="Q6BKQ1">
    <property type="interactions" value="163"/>
</dbReference>
<dbReference type="STRING" id="284592.Q6BKQ1"/>
<dbReference type="GeneID" id="2904039"/>
<dbReference type="KEGG" id="dha:DEHA2F20108g"/>
<dbReference type="VEuPathDB" id="FungiDB:DEHA2F20108g"/>
<dbReference type="eggNOG" id="ENOG502QS0P">
    <property type="taxonomic scope" value="Eukaryota"/>
</dbReference>
<dbReference type="HOGENOM" id="CLU_007861_1_0_1"/>
<dbReference type="InParanoid" id="Q6BKQ1"/>
<dbReference type="OMA" id="WTPEQAW"/>
<dbReference type="OrthoDB" id="10267654at2759"/>
<dbReference type="Proteomes" id="UP000000599">
    <property type="component" value="Chromosome F"/>
</dbReference>
<dbReference type="GO" id="GO:0005743">
    <property type="term" value="C:mitochondrial inner membrane"/>
    <property type="evidence" value="ECO:0007669"/>
    <property type="project" value="UniProtKB-SubCell"/>
</dbReference>
<dbReference type="GO" id="GO:0003723">
    <property type="term" value="F:RNA binding"/>
    <property type="evidence" value="ECO:0007669"/>
    <property type="project" value="UniProtKB-KW"/>
</dbReference>
<dbReference type="GO" id="GO:0000002">
    <property type="term" value="P:mitochondrial genome maintenance"/>
    <property type="evidence" value="ECO:0007669"/>
    <property type="project" value="EnsemblFungi"/>
</dbReference>
<dbReference type="GO" id="GO:0006397">
    <property type="term" value="P:mRNA processing"/>
    <property type="evidence" value="ECO:0007669"/>
    <property type="project" value="UniProtKB-KW"/>
</dbReference>
<dbReference type="CDD" id="cd12433">
    <property type="entry name" value="RRM_Yme2p_like"/>
    <property type="match status" value="1"/>
</dbReference>
<dbReference type="InterPro" id="IPR018850">
    <property type="entry name" value="Mt_escape_2_C"/>
</dbReference>
<dbReference type="InterPro" id="IPR027417">
    <property type="entry name" value="P-loop_NTPase"/>
</dbReference>
<dbReference type="InterPro" id="IPR035979">
    <property type="entry name" value="RBD_domain_sf"/>
</dbReference>
<dbReference type="InterPro" id="IPR039627">
    <property type="entry name" value="Yme2_C"/>
</dbReference>
<dbReference type="InterPro" id="IPR034260">
    <property type="entry name" value="Yme2_RRM"/>
</dbReference>
<dbReference type="PANTHER" id="PTHR32198">
    <property type="entry name" value="MITOCHONDRIAL ESCAPE PROTEIN 2"/>
    <property type="match status" value="1"/>
</dbReference>
<dbReference type="PANTHER" id="PTHR32198:SF2">
    <property type="entry name" value="MITOCHONDRIAL ESCAPE PROTEIN 2"/>
    <property type="match status" value="1"/>
</dbReference>
<dbReference type="Pfam" id="PF10443">
    <property type="entry name" value="RNA12"/>
    <property type="match status" value="1"/>
</dbReference>
<dbReference type="SUPFAM" id="SSF52540">
    <property type="entry name" value="P-loop containing nucleoside triphosphate hydrolases"/>
    <property type="match status" value="1"/>
</dbReference>
<dbReference type="SUPFAM" id="SSF54928">
    <property type="entry name" value="RNA-binding domain, RBD"/>
    <property type="match status" value="1"/>
</dbReference>
<sequence>MSGYQRPFIRNYASDVEDLKKEADRLETDKSASTTGVLDYEKQSEVVLYFDHIYPMPISGLSLKRKFLSPIQNRVTTDDLKQKVLDLSSTDSNPLPENTKISEFVPLKRDAGAFVKFEVPPETTCKELINQIVSNLEENEVQHNKNIFNYVKNLFWNKFPKCYQVKGTPWIEDLRRYPSPKLKVIFEGDPLTEEELYLLFRRYGLIVDIIPVSSSNPTATIIFKYLRSAVCAKNCITGISLNSSMTTLHLQYIPIERVNYLMDFIVNHQKITIPAIVALLATLAVLIFDPIRQLFIEQHITHKYSLETYKDNRYVKVVYYPYRSLVQWLNNSYDYIDEKLNQVYEGKGDLEVTSEDSENINILWNERFEKIKQLKLWIYENINTFIVVKGPKGSGKEEFVLDHTLNNDEKLKRKVLYIDCDALVKARSDNGLIKTTARQLGYFPVFTWTNSISQFVDLGVQGLTGQKSGLSESKETQLKNMFSLTTQALRNIALSDYEDYRNDTIKQQKRRTRKTENNTDEKPSISVEEEIIKEEDYLQQHPEAKPIIVVNNFQRKSDGNNDMIYKLIAEWTSSLVQSNMSHVIFITHDVGSVQHLTDSLPNQVFKTISLSDASQRSAKQYVWNQLNDPSLMNPDSLDKYIEPLGGRMLDLQAFIRRIKSGESANDALSEMVNQASEQITTFFLNNTVANESDSNWNTAQVWAIMKFLSENDSFEYNELSKISLFKSSNETLATLAALEKHDLISFTREKGVLSRISTGRPLYKAAFKELINDRKVYKLYETDYYNNLITIESTKIFKLEDEINKISRLSDIKYLKNRLEYVSSKINTATETIMKYEEKIKEIGKLNEKSSSSFLGIKFN</sequence>
<name>YME2_DEBHA</name>
<feature type="transit peptide" description="Mitochondrion" evidence="2">
    <location>
        <begin position="1"/>
        <end position="12"/>
    </location>
</feature>
<feature type="chain" id="PRO_0000343121" description="Mitochondrial escape protein 2">
    <location>
        <begin position="13"/>
        <end position="860"/>
    </location>
</feature>
<feature type="topological domain" description="Mitochondrial matrix" evidence="2">
    <location>
        <begin position="13"/>
        <end position="270"/>
    </location>
</feature>
<feature type="transmembrane region" description="Helical" evidence="2">
    <location>
        <begin position="271"/>
        <end position="291"/>
    </location>
</feature>
<feature type="topological domain" description="Mitochondrial intermembrane" evidence="2">
    <location>
        <begin position="292"/>
        <end position="860"/>
    </location>
</feature>
<feature type="domain" description="RRM">
    <location>
        <begin position="180"/>
        <end position="255"/>
    </location>
</feature>
<protein>
    <recommendedName>
        <fullName>Mitochondrial escape protein 2</fullName>
    </recommendedName>
</protein>
<reference key="1">
    <citation type="journal article" date="2004" name="Nature">
        <title>Genome evolution in yeasts.</title>
        <authorList>
            <person name="Dujon B."/>
            <person name="Sherman D."/>
            <person name="Fischer G."/>
            <person name="Durrens P."/>
            <person name="Casaregola S."/>
            <person name="Lafontaine I."/>
            <person name="de Montigny J."/>
            <person name="Marck C."/>
            <person name="Neuveglise C."/>
            <person name="Talla E."/>
            <person name="Goffard N."/>
            <person name="Frangeul L."/>
            <person name="Aigle M."/>
            <person name="Anthouard V."/>
            <person name="Babour A."/>
            <person name="Barbe V."/>
            <person name="Barnay S."/>
            <person name="Blanchin S."/>
            <person name="Beckerich J.-M."/>
            <person name="Beyne E."/>
            <person name="Bleykasten C."/>
            <person name="Boisrame A."/>
            <person name="Boyer J."/>
            <person name="Cattolico L."/>
            <person name="Confanioleri F."/>
            <person name="de Daruvar A."/>
            <person name="Despons L."/>
            <person name="Fabre E."/>
            <person name="Fairhead C."/>
            <person name="Ferry-Dumazet H."/>
            <person name="Groppi A."/>
            <person name="Hantraye F."/>
            <person name="Hennequin C."/>
            <person name="Jauniaux N."/>
            <person name="Joyet P."/>
            <person name="Kachouri R."/>
            <person name="Kerrest A."/>
            <person name="Koszul R."/>
            <person name="Lemaire M."/>
            <person name="Lesur I."/>
            <person name="Ma L."/>
            <person name="Muller H."/>
            <person name="Nicaud J.-M."/>
            <person name="Nikolski M."/>
            <person name="Oztas S."/>
            <person name="Ozier-Kalogeropoulos O."/>
            <person name="Pellenz S."/>
            <person name="Potier S."/>
            <person name="Richard G.-F."/>
            <person name="Straub M.-L."/>
            <person name="Suleau A."/>
            <person name="Swennen D."/>
            <person name="Tekaia F."/>
            <person name="Wesolowski-Louvel M."/>
            <person name="Westhof E."/>
            <person name="Wirth B."/>
            <person name="Zeniou-Meyer M."/>
            <person name="Zivanovic Y."/>
            <person name="Bolotin-Fukuhara M."/>
            <person name="Thierry A."/>
            <person name="Bouchier C."/>
            <person name="Caudron B."/>
            <person name="Scarpelli C."/>
            <person name="Gaillardin C."/>
            <person name="Weissenbach J."/>
            <person name="Wincker P."/>
            <person name="Souciet J.-L."/>
        </authorList>
    </citation>
    <scope>NUCLEOTIDE SEQUENCE [LARGE SCALE GENOMIC DNA]</scope>
    <source>
        <strain>ATCC 36239 / CBS 767 / BCRC 21394 / JCM 1990 / NBRC 0083 / IGC 2968</strain>
    </source>
</reference>
<evidence type="ECO:0000250" key="1"/>
<evidence type="ECO:0000255" key="2"/>
<evidence type="ECO:0000305" key="3"/>